<sequence>MKKPVVIGLAIAAIVAVIAGGTWWYQSRQDDGLTLYGNVDIRTVNISFRVGGRLASLNVDEGDTIKAGQVLGELDHAPYENALMQAKAGVSVAQAQYDLMLAGYRDEEIAQAAAAVRQAQAAYDYAQNFYNRQQGLWKSRTISANDLENARSSRDQAQATLKSAQDKLSQYRTGNREQDIAQAKASLEQAKAQLAQAQLDLQDTTLIAPANGTLLTRAVEPGSMLNAGSTVLTLSLTRPVWVRAYVDERNLSQTQPGRDILLYTDGRPDKPYHGKIGFVSPTAEFTPKTVETPDLRTDLVYRLRIIVTDADDALRQGMPVTVKFNDEARHE</sequence>
<gene>
    <name evidence="1" type="primary">ybhG</name>
    <name type="ordered locus">SCH_0815</name>
</gene>
<proteinExistence type="inferred from homology"/>
<name>YBHG_SALCH</name>
<comment type="subcellular location">
    <subcellularLocation>
        <location evidence="1">Periplasm</location>
    </subcellularLocation>
</comment>
<comment type="similarity">
    <text evidence="1">Belongs to the UPF0194 family.</text>
</comment>
<feature type="signal peptide" evidence="1">
    <location>
        <begin position="1"/>
        <end position="19"/>
    </location>
</feature>
<feature type="chain" id="PRO_1000051811" description="UPF0194 membrane protein YbhG">
    <location>
        <begin position="20"/>
        <end position="331"/>
    </location>
</feature>
<feature type="coiled-coil region" evidence="1">
    <location>
        <begin position="107"/>
        <end position="208"/>
    </location>
</feature>
<keyword id="KW-0175">Coiled coil</keyword>
<keyword id="KW-0574">Periplasm</keyword>
<keyword id="KW-0732">Signal</keyword>
<reference key="1">
    <citation type="journal article" date="2005" name="Nucleic Acids Res.">
        <title>The genome sequence of Salmonella enterica serovar Choleraesuis, a highly invasive and resistant zoonotic pathogen.</title>
        <authorList>
            <person name="Chiu C.-H."/>
            <person name="Tang P."/>
            <person name="Chu C."/>
            <person name="Hu S."/>
            <person name="Bao Q."/>
            <person name="Yu J."/>
            <person name="Chou Y.-Y."/>
            <person name="Wang H.-S."/>
            <person name="Lee Y.-S."/>
        </authorList>
    </citation>
    <scope>NUCLEOTIDE SEQUENCE [LARGE SCALE GENOMIC DNA]</scope>
    <source>
        <strain>SC-B67</strain>
    </source>
</reference>
<organism>
    <name type="scientific">Salmonella choleraesuis (strain SC-B67)</name>
    <dbReference type="NCBI Taxonomy" id="321314"/>
    <lineage>
        <taxon>Bacteria</taxon>
        <taxon>Pseudomonadati</taxon>
        <taxon>Pseudomonadota</taxon>
        <taxon>Gammaproteobacteria</taxon>
        <taxon>Enterobacterales</taxon>
        <taxon>Enterobacteriaceae</taxon>
        <taxon>Salmonella</taxon>
    </lineage>
</organism>
<accession>Q57RE0</accession>
<dbReference type="EMBL" id="AE017220">
    <property type="protein sequence ID" value="AAX64721.1"/>
    <property type="molecule type" value="Genomic_DNA"/>
</dbReference>
<dbReference type="SMR" id="Q57RE0"/>
<dbReference type="KEGG" id="sec:SCH_0815"/>
<dbReference type="HOGENOM" id="CLU_018816_6_3_6"/>
<dbReference type="Proteomes" id="UP000000538">
    <property type="component" value="Chromosome"/>
</dbReference>
<dbReference type="GO" id="GO:0042597">
    <property type="term" value="C:periplasmic space"/>
    <property type="evidence" value="ECO:0007669"/>
    <property type="project" value="UniProtKB-SubCell"/>
</dbReference>
<dbReference type="FunFam" id="1.10.287.470:FF:000004">
    <property type="entry name" value="UPF0194 membrane protein YbhG"/>
    <property type="match status" value="1"/>
</dbReference>
<dbReference type="FunFam" id="2.40.50.100:FF:000025">
    <property type="entry name" value="UPF0194 membrane protein YbhG"/>
    <property type="match status" value="1"/>
</dbReference>
<dbReference type="Gene3D" id="2.40.30.170">
    <property type="match status" value="1"/>
</dbReference>
<dbReference type="Gene3D" id="2.40.50.100">
    <property type="match status" value="2"/>
</dbReference>
<dbReference type="Gene3D" id="1.10.287.470">
    <property type="entry name" value="Helix hairpin bin"/>
    <property type="match status" value="1"/>
</dbReference>
<dbReference type="HAMAP" id="MF_01304">
    <property type="entry name" value="UPF0194"/>
    <property type="match status" value="1"/>
</dbReference>
<dbReference type="InterPro" id="IPR032317">
    <property type="entry name" value="CusB_D23"/>
</dbReference>
<dbReference type="InterPro" id="IPR022936">
    <property type="entry name" value="UPF0194_membrane_YbhG"/>
</dbReference>
<dbReference type="InterPro" id="IPR050465">
    <property type="entry name" value="UPF0194_transport"/>
</dbReference>
<dbReference type="NCBIfam" id="NF002939">
    <property type="entry name" value="PRK03598.1"/>
    <property type="match status" value="1"/>
</dbReference>
<dbReference type="PANTHER" id="PTHR32347">
    <property type="entry name" value="EFFLUX SYSTEM COMPONENT YKNX-RELATED"/>
    <property type="match status" value="1"/>
</dbReference>
<dbReference type="PANTHER" id="PTHR32347:SF29">
    <property type="entry name" value="UPF0194 MEMBRANE PROTEIN YBHG"/>
    <property type="match status" value="1"/>
</dbReference>
<dbReference type="Pfam" id="PF16576">
    <property type="entry name" value="HlyD_D23"/>
    <property type="match status" value="1"/>
</dbReference>
<dbReference type="SUPFAM" id="SSF111369">
    <property type="entry name" value="HlyD-like secretion proteins"/>
    <property type="match status" value="3"/>
</dbReference>
<protein>
    <recommendedName>
        <fullName evidence="1">UPF0194 membrane protein YbhG</fullName>
    </recommendedName>
</protein>
<evidence type="ECO:0000255" key="1">
    <source>
        <dbReference type="HAMAP-Rule" id="MF_01304"/>
    </source>
</evidence>